<dbReference type="EC" id="5.6.2.4" evidence="1"/>
<dbReference type="EMBL" id="AL445065">
    <property type="protein sequence ID" value="CAC11964.1"/>
    <property type="molecule type" value="Genomic_DNA"/>
</dbReference>
<dbReference type="RefSeq" id="WP_010901246.1">
    <property type="nucleotide sequence ID" value="NC_002578.1"/>
</dbReference>
<dbReference type="SMR" id="Q9HJX7"/>
<dbReference type="FunCoup" id="Q9HJX7">
    <property type="interactions" value="84"/>
</dbReference>
<dbReference type="STRING" id="273075.gene:9572049"/>
<dbReference type="PaxDb" id="273075-Ta0835"/>
<dbReference type="EnsemblBacteria" id="CAC11964">
    <property type="protein sequence ID" value="CAC11964"/>
    <property type="gene ID" value="CAC11964"/>
</dbReference>
<dbReference type="KEGG" id="tac:Ta0835"/>
<dbReference type="eggNOG" id="arCOG00553">
    <property type="taxonomic scope" value="Archaea"/>
</dbReference>
<dbReference type="HOGENOM" id="CLU_006553_3_0_2"/>
<dbReference type="InParanoid" id="Q9HJX7"/>
<dbReference type="OrthoDB" id="371946at2157"/>
<dbReference type="Proteomes" id="UP000001024">
    <property type="component" value="Chromosome"/>
</dbReference>
<dbReference type="GO" id="GO:0043138">
    <property type="term" value="F:3'-5' DNA helicase activity"/>
    <property type="evidence" value="ECO:0007669"/>
    <property type="project" value="UniProtKB-UniRule"/>
</dbReference>
<dbReference type="GO" id="GO:0005524">
    <property type="term" value="F:ATP binding"/>
    <property type="evidence" value="ECO:0007669"/>
    <property type="project" value="UniProtKB-UniRule"/>
</dbReference>
<dbReference type="GO" id="GO:0016887">
    <property type="term" value="F:ATP hydrolysis activity"/>
    <property type="evidence" value="ECO:0007669"/>
    <property type="project" value="RHEA"/>
</dbReference>
<dbReference type="GO" id="GO:0003677">
    <property type="term" value="F:DNA binding"/>
    <property type="evidence" value="ECO:0007669"/>
    <property type="project" value="UniProtKB-UniRule"/>
</dbReference>
<dbReference type="GO" id="GO:0006281">
    <property type="term" value="P:DNA repair"/>
    <property type="evidence" value="ECO:0007669"/>
    <property type="project" value="UniProtKB-UniRule"/>
</dbReference>
<dbReference type="CDD" id="cd18795">
    <property type="entry name" value="SF2_C_Ski2"/>
    <property type="match status" value="1"/>
</dbReference>
<dbReference type="Gene3D" id="1.10.3380.30">
    <property type="match status" value="1"/>
</dbReference>
<dbReference type="Gene3D" id="1.10.150.20">
    <property type="entry name" value="5' to 3' exonuclease, C-terminal subdomain"/>
    <property type="match status" value="1"/>
</dbReference>
<dbReference type="Gene3D" id="3.40.50.300">
    <property type="entry name" value="P-loop containing nucleotide triphosphate hydrolases"/>
    <property type="match status" value="2"/>
</dbReference>
<dbReference type="HAMAP" id="MF_00442">
    <property type="entry name" value="Helicase_Hel308"/>
    <property type="match status" value="1"/>
</dbReference>
<dbReference type="InterPro" id="IPR011545">
    <property type="entry name" value="DEAD/DEAH_box_helicase_dom"/>
</dbReference>
<dbReference type="InterPro" id="IPR048772">
    <property type="entry name" value="Hel308-like_dom4"/>
</dbReference>
<dbReference type="InterPro" id="IPR050474">
    <property type="entry name" value="Hel308_SKI2-like"/>
</dbReference>
<dbReference type="InterPro" id="IPR014001">
    <property type="entry name" value="Helicase_ATP-bd"/>
</dbReference>
<dbReference type="InterPro" id="IPR001650">
    <property type="entry name" value="Helicase_C-like"/>
</dbReference>
<dbReference type="InterPro" id="IPR022965">
    <property type="entry name" value="Helicase_Hel308"/>
</dbReference>
<dbReference type="InterPro" id="IPR046931">
    <property type="entry name" value="HTH_61"/>
</dbReference>
<dbReference type="InterPro" id="IPR027417">
    <property type="entry name" value="P-loop_NTPase"/>
</dbReference>
<dbReference type="InterPro" id="IPR036390">
    <property type="entry name" value="WH_DNA-bd_sf"/>
</dbReference>
<dbReference type="NCBIfam" id="NF002251">
    <property type="entry name" value="PRK01172.1"/>
    <property type="match status" value="1"/>
</dbReference>
<dbReference type="PANTHER" id="PTHR47961:SF10">
    <property type="entry name" value="ATP-DEPENDENT DNA HELICASE HEL308"/>
    <property type="match status" value="1"/>
</dbReference>
<dbReference type="PANTHER" id="PTHR47961">
    <property type="entry name" value="DNA POLYMERASE THETA, PUTATIVE (AFU_ORTHOLOGUE AFUA_1G05260)-RELATED"/>
    <property type="match status" value="1"/>
</dbReference>
<dbReference type="Pfam" id="PF00270">
    <property type="entry name" value="DEAD"/>
    <property type="match status" value="1"/>
</dbReference>
<dbReference type="Pfam" id="PF00271">
    <property type="entry name" value="Helicase_C"/>
    <property type="match status" value="1"/>
</dbReference>
<dbReference type="Pfam" id="PF21280">
    <property type="entry name" value="Helicase_dom4_arc"/>
    <property type="match status" value="1"/>
</dbReference>
<dbReference type="Pfam" id="PF14520">
    <property type="entry name" value="HHH_5"/>
    <property type="match status" value="1"/>
</dbReference>
<dbReference type="Pfam" id="PF20470">
    <property type="entry name" value="HTH_61"/>
    <property type="match status" value="1"/>
</dbReference>
<dbReference type="SMART" id="SM00487">
    <property type="entry name" value="DEXDc"/>
    <property type="match status" value="1"/>
</dbReference>
<dbReference type="SMART" id="SM00490">
    <property type="entry name" value="HELICc"/>
    <property type="match status" value="1"/>
</dbReference>
<dbReference type="SUPFAM" id="SSF52540">
    <property type="entry name" value="P-loop containing nucleoside triphosphate hydrolases"/>
    <property type="match status" value="1"/>
</dbReference>
<dbReference type="SUPFAM" id="SSF158702">
    <property type="entry name" value="Sec63 N-terminal domain-like"/>
    <property type="match status" value="1"/>
</dbReference>
<dbReference type="SUPFAM" id="SSF46785">
    <property type="entry name" value="Winged helix' DNA-binding domain"/>
    <property type="match status" value="1"/>
</dbReference>
<dbReference type="PROSITE" id="PS51192">
    <property type="entry name" value="HELICASE_ATP_BIND_1"/>
    <property type="match status" value="1"/>
</dbReference>
<dbReference type="PROSITE" id="PS51194">
    <property type="entry name" value="HELICASE_CTER"/>
    <property type="match status" value="1"/>
</dbReference>
<feature type="chain" id="PRO_0000102114" description="ATP-dependent DNA helicase Hel308">
    <location>
        <begin position="1"/>
        <end position="674"/>
    </location>
</feature>
<feature type="domain" description="Helicase ATP-binding" evidence="1">
    <location>
        <begin position="31"/>
        <end position="197"/>
    </location>
</feature>
<feature type="domain" description="Helicase C-terminal" evidence="1">
    <location>
        <begin position="224"/>
        <end position="411"/>
    </location>
</feature>
<feature type="short sequence motif" description="DEAH box" evidence="1">
    <location>
        <begin position="142"/>
        <end position="145"/>
    </location>
</feature>
<feature type="binding site" evidence="1">
    <location>
        <position position="27"/>
    </location>
    <ligand>
        <name>ATP</name>
        <dbReference type="ChEBI" id="CHEBI:30616"/>
    </ligand>
</feature>
<feature type="binding site" evidence="1">
    <location>
        <begin position="44"/>
        <end position="51"/>
    </location>
    <ligand>
        <name>ATP</name>
        <dbReference type="ChEBI" id="CHEBI:30616"/>
    </ligand>
</feature>
<evidence type="ECO:0000255" key="1">
    <source>
        <dbReference type="HAMAP-Rule" id="MF_00442"/>
    </source>
</evidence>
<comment type="function">
    <text evidence="1">DNA-dependent ATPase and 3'-5' DNA helicase that may be involved in repair of stalled replication forks.</text>
</comment>
<comment type="catalytic activity">
    <reaction evidence="1">
        <text>Couples ATP hydrolysis with the unwinding of duplex DNA by translocating in the 3'-5' direction.</text>
        <dbReference type="EC" id="5.6.2.4"/>
    </reaction>
</comment>
<comment type="catalytic activity">
    <reaction evidence="1">
        <text>ATP + H2O = ADP + phosphate + H(+)</text>
        <dbReference type="Rhea" id="RHEA:13065"/>
        <dbReference type="ChEBI" id="CHEBI:15377"/>
        <dbReference type="ChEBI" id="CHEBI:15378"/>
        <dbReference type="ChEBI" id="CHEBI:30616"/>
        <dbReference type="ChEBI" id="CHEBI:43474"/>
        <dbReference type="ChEBI" id="CHEBI:456216"/>
        <dbReference type="EC" id="5.6.2.4"/>
    </reaction>
</comment>
<comment type="subunit">
    <text evidence="1">Monomer.</text>
</comment>
<comment type="similarity">
    <text evidence="1">Belongs to the helicase family. Hel308 subfamily.</text>
</comment>
<sequence length="674" mass="75754">MKISELGYDRAFLQLFDGNDFQLYDHQRMAIEQIRKGRNVVVSVPTAAGKTLIAYSAIYETFQRNLKSIYIVPLRSLAMEKFSELSRLRDLGLKVKMSIGDYDDSPDFIKRYDAVILTSEKADSLLHHDPYILNDVGLLVLDEIHTIGDESRGPTLETVASIARYVNPDVRILALSATVSNAMELASWLDASLIKSDFRPVPLKTGILYRDQLYLDGKRRSGVSINQIIRETVEDNGQVLMFVSSRKKAEDTARDLAQIFGSDANIKISSDETNVYDDMLNEILPRGVAFHHAGLSNDQRAFIEREFRARRIKVIVATPTLAAGVNLPARLVIVRDITRWGSDGISYLTNMEIKQMIGRAGRPGYDQYGIGLIYVSSQSSYEAAKDYLSTDPEPVVSYLGNEAKVRFNTLAAISMGLARSPSDIMKFYETTLFFSQNGKDLLEEKISASLKFLEKNGFIKQSPDLRTTQLGKVTSDLYIDPESALRLVDFFDGPADVDHAIYYISLCREIVPFNIKDDYSAMEFLDDIGLIDGDIDAAKTAIVLRDWISEASYKYLYDKYGIAPGDMQARISMADWLSYSLAKLSSIYKPEVRRMLEILNLRIKEGIREDILQLVLIPGVGRVRARRLYDAGLRSIEDVASASPDRIKAIYGFSDTLANAIIRRARTIASKEVR</sequence>
<name>HELS_THEAC</name>
<proteinExistence type="inferred from homology"/>
<accession>Q9HJX7</accession>
<gene>
    <name evidence="1" type="primary">hel308</name>
    <name type="ordered locus">Ta0835</name>
</gene>
<protein>
    <recommendedName>
        <fullName evidence="1">ATP-dependent DNA helicase Hel308</fullName>
        <ecNumber evidence="1">5.6.2.4</ecNumber>
    </recommendedName>
    <alternativeName>
        <fullName evidence="1">DNA 3'-5' helicase Hel308</fullName>
    </alternativeName>
</protein>
<keyword id="KW-0067">ATP-binding</keyword>
<keyword id="KW-0227">DNA damage</keyword>
<keyword id="KW-0234">DNA repair</keyword>
<keyword id="KW-0238">DNA-binding</keyword>
<keyword id="KW-0347">Helicase</keyword>
<keyword id="KW-0378">Hydrolase</keyword>
<keyword id="KW-0413">Isomerase</keyword>
<keyword id="KW-0547">Nucleotide-binding</keyword>
<keyword id="KW-1185">Reference proteome</keyword>
<reference key="1">
    <citation type="journal article" date="2000" name="Nature">
        <title>The genome sequence of the thermoacidophilic scavenger Thermoplasma acidophilum.</title>
        <authorList>
            <person name="Ruepp A."/>
            <person name="Graml W."/>
            <person name="Santos-Martinez M.-L."/>
            <person name="Koretke K.K."/>
            <person name="Volker C."/>
            <person name="Mewes H.-W."/>
            <person name="Frishman D."/>
            <person name="Stocker S."/>
            <person name="Lupas A.N."/>
            <person name="Baumeister W."/>
        </authorList>
    </citation>
    <scope>NUCLEOTIDE SEQUENCE [LARGE SCALE GENOMIC DNA]</scope>
    <source>
        <strain>ATCC 25905 / DSM 1728 / JCM 9062 / NBRC 15155 / AMRC-C165</strain>
    </source>
</reference>
<organism>
    <name type="scientific">Thermoplasma acidophilum (strain ATCC 25905 / DSM 1728 / JCM 9062 / NBRC 15155 / AMRC-C165)</name>
    <dbReference type="NCBI Taxonomy" id="273075"/>
    <lineage>
        <taxon>Archaea</taxon>
        <taxon>Methanobacteriati</taxon>
        <taxon>Thermoplasmatota</taxon>
        <taxon>Thermoplasmata</taxon>
        <taxon>Thermoplasmatales</taxon>
        <taxon>Thermoplasmataceae</taxon>
        <taxon>Thermoplasma</taxon>
    </lineage>
</organism>